<feature type="chain" id="PRO_0000333763" description="3-phenylpropionate-dihydrodiol/cinnamic acid-dihydrodiol dehydrogenase">
    <location>
        <begin position="1"/>
        <end position="280"/>
    </location>
</feature>
<feature type="active site" description="Proton acceptor" evidence="1">
    <location>
        <position position="156"/>
    </location>
</feature>
<feature type="binding site" evidence="1">
    <location>
        <position position="143"/>
    </location>
    <ligand>
        <name>substrate</name>
    </ligand>
</feature>
<evidence type="ECO:0000255" key="1">
    <source>
        <dbReference type="HAMAP-Rule" id="MF_01647"/>
    </source>
</evidence>
<reference key="1">
    <citation type="journal article" date="2003" name="Nat. Biotechnol.">
        <title>The genome sequence of the entomopathogenic bacterium Photorhabdus luminescens.</title>
        <authorList>
            <person name="Duchaud E."/>
            <person name="Rusniok C."/>
            <person name="Frangeul L."/>
            <person name="Buchrieser C."/>
            <person name="Givaudan A."/>
            <person name="Taourit S."/>
            <person name="Bocs S."/>
            <person name="Boursaux-Eude C."/>
            <person name="Chandler M."/>
            <person name="Charles J.-F."/>
            <person name="Dassa E."/>
            <person name="Derose R."/>
            <person name="Derzelle S."/>
            <person name="Freyssinet G."/>
            <person name="Gaudriault S."/>
            <person name="Medigue C."/>
            <person name="Lanois A."/>
            <person name="Powell K."/>
            <person name="Siguier P."/>
            <person name="Vincent R."/>
            <person name="Wingate V."/>
            <person name="Zouine M."/>
            <person name="Glaser P."/>
            <person name="Boemare N."/>
            <person name="Danchin A."/>
            <person name="Kunst F."/>
        </authorList>
    </citation>
    <scope>NUCLEOTIDE SEQUENCE [LARGE SCALE GENOMIC DNA]</scope>
    <source>
        <strain>DSM 15139 / CIP 105565 / TT01</strain>
    </source>
</reference>
<organism>
    <name type="scientific">Photorhabdus laumondii subsp. laumondii (strain DSM 15139 / CIP 105565 / TT01)</name>
    <name type="common">Photorhabdus luminescens subsp. laumondii</name>
    <dbReference type="NCBI Taxonomy" id="243265"/>
    <lineage>
        <taxon>Bacteria</taxon>
        <taxon>Pseudomonadati</taxon>
        <taxon>Pseudomonadota</taxon>
        <taxon>Gammaproteobacteria</taxon>
        <taxon>Enterobacterales</taxon>
        <taxon>Morganellaceae</taxon>
        <taxon>Photorhabdus</taxon>
    </lineage>
</organism>
<name>HCAB_PHOLL</name>
<dbReference type="EC" id="1.3.1.87" evidence="1"/>
<dbReference type="EMBL" id="BX571866">
    <property type="protein sequence ID" value="CAE14500.1"/>
    <property type="molecule type" value="Genomic_DNA"/>
</dbReference>
<dbReference type="RefSeq" id="WP_011146459.1">
    <property type="nucleotide sequence ID" value="NC_005126.1"/>
</dbReference>
<dbReference type="SMR" id="Q7N4V7"/>
<dbReference type="STRING" id="243265.plu2207"/>
<dbReference type="GeneID" id="48848483"/>
<dbReference type="KEGG" id="plu:plu2207"/>
<dbReference type="eggNOG" id="COG1028">
    <property type="taxonomic scope" value="Bacteria"/>
</dbReference>
<dbReference type="HOGENOM" id="CLU_010194_1_0_6"/>
<dbReference type="OrthoDB" id="9803333at2"/>
<dbReference type="UniPathway" id="UPA00714"/>
<dbReference type="Proteomes" id="UP000002514">
    <property type="component" value="Chromosome"/>
</dbReference>
<dbReference type="GO" id="GO:0018498">
    <property type="term" value="F:2,3-dihydroxy-2,3-dihydro-phenylpropionate dehydrogenase activity"/>
    <property type="evidence" value="ECO:0007669"/>
    <property type="project" value="UniProtKB-UniRule"/>
</dbReference>
<dbReference type="GO" id="GO:0019380">
    <property type="term" value="P:3-phenylpropionate catabolic process"/>
    <property type="evidence" value="ECO:0007669"/>
    <property type="project" value="UniProtKB-UniRule"/>
</dbReference>
<dbReference type="CDD" id="cd05348">
    <property type="entry name" value="BphB-like_SDR_c"/>
    <property type="match status" value="1"/>
</dbReference>
<dbReference type="Gene3D" id="3.40.50.720">
    <property type="entry name" value="NAD(P)-binding Rossmann-like Domain"/>
    <property type="match status" value="1"/>
</dbReference>
<dbReference type="HAMAP" id="MF_01647">
    <property type="entry name" value="HcaB"/>
    <property type="match status" value="1"/>
</dbReference>
<dbReference type="InterPro" id="IPR047950">
    <property type="entry name" value="BphB-like_SDR"/>
</dbReference>
<dbReference type="InterPro" id="IPR023643">
    <property type="entry name" value="Dihydrodiol_DH_HcaB"/>
</dbReference>
<dbReference type="InterPro" id="IPR036291">
    <property type="entry name" value="NAD(P)-bd_dom_sf"/>
</dbReference>
<dbReference type="InterPro" id="IPR020904">
    <property type="entry name" value="Sc_DH/Rdtase_CS"/>
</dbReference>
<dbReference type="InterPro" id="IPR002347">
    <property type="entry name" value="SDR_fam"/>
</dbReference>
<dbReference type="NCBIfam" id="NF042950">
    <property type="entry name" value="3PPDhyd_Dh_HcaB"/>
    <property type="match status" value="1"/>
</dbReference>
<dbReference type="NCBIfam" id="NF004849">
    <property type="entry name" value="PRK06200.1"/>
    <property type="match status" value="1"/>
</dbReference>
<dbReference type="PANTHER" id="PTHR43180">
    <property type="entry name" value="3-OXOACYL-(ACYL-CARRIER-PROTEIN) REDUCTASE (AFU_ORTHOLOGUE AFUA_6G11210)"/>
    <property type="match status" value="1"/>
</dbReference>
<dbReference type="PANTHER" id="PTHR43180:SF66">
    <property type="entry name" value="SHORT-CHAIN DEHYDROGENASE_REDUCTASE FAMILY PROTEIN"/>
    <property type="match status" value="1"/>
</dbReference>
<dbReference type="Pfam" id="PF00106">
    <property type="entry name" value="adh_short"/>
    <property type="match status" value="1"/>
</dbReference>
<dbReference type="PRINTS" id="PR00081">
    <property type="entry name" value="GDHRDH"/>
</dbReference>
<dbReference type="PRINTS" id="PR00080">
    <property type="entry name" value="SDRFAMILY"/>
</dbReference>
<dbReference type="SUPFAM" id="SSF51735">
    <property type="entry name" value="NAD(P)-binding Rossmann-fold domains"/>
    <property type="match status" value="1"/>
</dbReference>
<dbReference type="PROSITE" id="PS00061">
    <property type="entry name" value="ADH_SHORT"/>
    <property type="match status" value="1"/>
</dbReference>
<gene>
    <name evidence="1" type="primary">hcaB</name>
    <name type="ordered locus">plu2207</name>
</gene>
<sequence>MSWIKDQVILLTGGGSGLGLALIERFIAEGAKVGVLELSAEKATALAHCFGNDICVIHGDVVSFEDNERAVAETVRCFGKLDCFVGNAGIWDHKISLLDASPEQIDKGFDELMGVNLKGYILGAKAALPALTASEGSMIFTLSNSSWFSGGGGVLYTASKHGAVGMIRQLAYELAPVIRVNGVAPCGMPSDLRGAASLSQQDRCITDNLSLESLSAILPLQFIPQPKDFTGPYVMLASRANNRTLTGVMITADAGLSIRGIRQTTAGVMSPTKKESSDDR</sequence>
<comment type="function">
    <text evidence="1">Converts 3-phenylpropionate-dihydrodiol (PP-dihydrodiol) and cinnamic acid-dihydrodiol (CI-dihydrodiol) into 3-(2,3-dihydroxylphenyl)propanoic acid (DHPP) and 2,3-dihydroxicinnamic acid (DHCI), respectively.</text>
</comment>
<comment type="catalytic activity">
    <reaction evidence="1">
        <text>3-(cis-5,6-dihydroxycyclohexa-1,3-dien-1-yl)propanoate + NAD(+) = 3-(2,3-dihydroxyphenyl)propanoate + NADH + H(+)</text>
        <dbReference type="Rhea" id="RHEA:25062"/>
        <dbReference type="ChEBI" id="CHEBI:15378"/>
        <dbReference type="ChEBI" id="CHEBI:46951"/>
        <dbReference type="ChEBI" id="CHEBI:57540"/>
        <dbReference type="ChEBI" id="CHEBI:57945"/>
        <dbReference type="ChEBI" id="CHEBI:60087"/>
        <dbReference type="EC" id="1.3.1.87"/>
    </reaction>
</comment>
<comment type="catalytic activity">
    <reaction evidence="1">
        <text>(2E)-3-(cis-5,6-dihydroxycyclohexa-1,3-dien-1-yl)prop-2-enoate + NAD(+) = (2E)-3-(2,3-dihydroxyphenyl)prop-2-enoate + NADH + H(+)</text>
        <dbReference type="Rhea" id="RHEA:25066"/>
        <dbReference type="ChEBI" id="CHEBI:15378"/>
        <dbReference type="ChEBI" id="CHEBI:57540"/>
        <dbReference type="ChEBI" id="CHEBI:57945"/>
        <dbReference type="ChEBI" id="CHEBI:58642"/>
        <dbReference type="ChEBI" id="CHEBI:61451"/>
        <dbReference type="EC" id="1.3.1.87"/>
    </reaction>
</comment>
<comment type="pathway">
    <text evidence="1">Aromatic compound metabolism; 3-phenylpropanoate degradation.</text>
</comment>
<comment type="similarity">
    <text evidence="1">Belongs to the short-chain dehydrogenases/reductases (SDR) family.</text>
</comment>
<accession>Q7N4V7</accession>
<proteinExistence type="inferred from homology"/>
<keyword id="KW-0058">Aromatic hydrocarbons catabolism</keyword>
<keyword id="KW-0520">NAD</keyword>
<keyword id="KW-0560">Oxidoreductase</keyword>
<keyword id="KW-1185">Reference proteome</keyword>
<protein>
    <recommendedName>
        <fullName evidence="1">3-phenylpropionate-dihydrodiol/cinnamic acid-dihydrodiol dehydrogenase</fullName>
        <ecNumber evidence="1">1.3.1.87</ecNumber>
    </recommendedName>
    <alternativeName>
        <fullName evidence="1">2,3-dihydroxy-2,3-dihydrophenylpropionate dehydrogenase</fullName>
    </alternativeName>
    <alternativeName>
        <fullName evidence="1">3-(cis-5,6-dihydroxycyclohexa-1,3-dien-1-yl)propanoate dehydrogenase</fullName>
    </alternativeName>
    <alternativeName>
        <fullName evidence="1">CI-dihydrodiol dehydrogenase</fullName>
    </alternativeName>
    <alternativeName>
        <fullName evidence="1">Cis-3-(2-carboxyethenyl)-3,5-cyclohexadiene-1,2-diol dehydrogenase</fullName>
    </alternativeName>
    <alternativeName>
        <fullName evidence="1">Cis-3-(2-carboxyethyl)-3,5-cyclohexadiene-1,2-diol dehydrogenase</fullName>
    </alternativeName>
    <alternativeName>
        <fullName evidence="1">PP-dihydrodiol dehydrogenase</fullName>
    </alternativeName>
</protein>